<proteinExistence type="evidence at protein level"/>
<evidence type="ECO:0000250" key="1">
    <source>
        <dbReference type="UniProtKB" id="Q8BS95"/>
    </source>
</evidence>
<evidence type="ECO:0000255" key="2"/>
<evidence type="ECO:0000269" key="3">
    <source>
    </source>
</evidence>
<evidence type="ECO:0000269" key="4">
    <source>
    </source>
</evidence>
<evidence type="ECO:0000303" key="5">
    <source>
    </source>
</evidence>
<evidence type="ECO:0000303" key="6">
    <source>
    </source>
</evidence>
<evidence type="ECO:0000303" key="7">
    <source>
    </source>
</evidence>
<evidence type="ECO:0000305" key="8"/>
<evidence type="ECO:0000312" key="9">
    <source>
        <dbReference type="HGNC" id="HGNC:31984"/>
    </source>
</evidence>
<reference key="1">
    <citation type="journal article" date="2000" name="Genome Res.">
        <title>Identification of novel human genes evolutionarily conserved in Caenorhabditis elegans by comparative proteomics.</title>
        <authorList>
            <person name="Lai C.-H."/>
            <person name="Chou C.-Y."/>
            <person name="Ch'ang L.-Y."/>
            <person name="Liu C.-S."/>
            <person name="Lin W.-C."/>
        </authorList>
    </citation>
    <scope>NUCLEOTIDE SEQUENCE [LARGE SCALE MRNA] (ISOFORM 1)</scope>
</reference>
<reference key="2">
    <citation type="journal article" date="2014" name="Nat. Commun.">
        <title>Protein interaction network of alternatively spliced isoforms from brain links genetic risk factors for autism.</title>
        <authorList>
            <person name="Corominas R."/>
            <person name="Yang X."/>
            <person name="Lin G.N."/>
            <person name="Kang S."/>
            <person name="Shen Y."/>
            <person name="Ghamsari L."/>
            <person name="Broly M."/>
            <person name="Rodriguez M."/>
            <person name="Tam S."/>
            <person name="Wanamaker S.A."/>
            <person name="Fan C."/>
            <person name="Yi S."/>
            <person name="Tasan M."/>
            <person name="Lemmens I."/>
            <person name="Kuang X."/>
            <person name="Zhao N."/>
            <person name="Malhotra D."/>
            <person name="Michaelson J.J."/>
            <person name="Vacic V."/>
            <person name="Calderwood M.A."/>
            <person name="Roth F.P."/>
            <person name="Tavernier J."/>
            <person name="Horvath S."/>
            <person name="Salehi-Ashtiani K."/>
            <person name="Korkin D."/>
            <person name="Sebat J."/>
            <person name="Hill D.E."/>
            <person name="Hao T."/>
            <person name="Vidal M."/>
            <person name="Iakoucheva L.M."/>
        </authorList>
    </citation>
    <scope>NUCLEOTIDE SEQUENCE [MRNA] (ISOFORM 4)</scope>
    <source>
        <tissue>Brain</tissue>
    </source>
</reference>
<reference key="3">
    <citation type="journal article" date="2003" name="Genome Res.">
        <title>The secreted protein discovery initiative (SPDI), a large-scale effort to identify novel human secreted and transmembrane proteins: a bioinformatics assessment.</title>
        <authorList>
            <person name="Clark H.F."/>
            <person name="Gurney A.L."/>
            <person name="Abaya E."/>
            <person name="Baker K."/>
            <person name="Baldwin D.T."/>
            <person name="Brush J."/>
            <person name="Chen J."/>
            <person name="Chow B."/>
            <person name="Chui C."/>
            <person name="Crowley C."/>
            <person name="Currell B."/>
            <person name="Deuel B."/>
            <person name="Dowd P."/>
            <person name="Eaton D."/>
            <person name="Foster J.S."/>
            <person name="Grimaldi C."/>
            <person name="Gu Q."/>
            <person name="Hass P.E."/>
            <person name="Heldens S."/>
            <person name="Huang A."/>
            <person name="Kim H.S."/>
            <person name="Klimowski L."/>
            <person name="Jin Y."/>
            <person name="Johnson S."/>
            <person name="Lee J."/>
            <person name="Lewis L."/>
            <person name="Liao D."/>
            <person name="Mark M.R."/>
            <person name="Robbie E."/>
            <person name="Sanchez C."/>
            <person name="Schoenfeld J."/>
            <person name="Seshagiri S."/>
            <person name="Simmons L."/>
            <person name="Singh J."/>
            <person name="Smith V."/>
            <person name="Stinson J."/>
            <person name="Vagts A."/>
            <person name="Vandlen R.L."/>
            <person name="Watanabe C."/>
            <person name="Wieand D."/>
            <person name="Woods K."/>
            <person name="Xie M.-H."/>
            <person name="Yansura D.G."/>
            <person name="Yi S."/>
            <person name="Yu G."/>
            <person name="Yuan J."/>
            <person name="Zhang M."/>
            <person name="Zhang Z."/>
            <person name="Goddard A.D."/>
            <person name="Wood W.I."/>
            <person name="Godowski P.J."/>
            <person name="Gray A.M."/>
        </authorList>
    </citation>
    <scope>NUCLEOTIDE SEQUENCE [LARGE SCALE MRNA] (ISOFORM 1)</scope>
</reference>
<reference key="4">
    <citation type="journal article" date="2003" name="Oncogene">
        <title>Large-scale identification and characterization of human genes that activate NF-kappaB and MAPK signaling pathways.</title>
        <authorList>
            <person name="Matsuda A."/>
            <person name="Suzuki Y."/>
            <person name="Honda G."/>
            <person name="Muramatsu S."/>
            <person name="Matsuzaki O."/>
            <person name="Nagano Y."/>
            <person name="Doi T."/>
            <person name="Shimotohno K."/>
            <person name="Harada T."/>
            <person name="Nishida E."/>
            <person name="Hayashi H."/>
            <person name="Sugano S."/>
        </authorList>
    </citation>
    <scope>NUCLEOTIDE SEQUENCE [LARGE SCALE MRNA] (ISOFORM 1)</scope>
    <source>
        <tissue>Lung fibroblast</tissue>
    </source>
</reference>
<reference key="5">
    <citation type="submission" date="2003-05" db="EMBL/GenBank/DDBJ databases">
        <title>Cloning of human full-length CDSs in BD Creator(TM) system donor vector.</title>
        <authorList>
            <person name="Kalnine N."/>
            <person name="Chen X."/>
            <person name="Rolfs A."/>
            <person name="Halleck A."/>
            <person name="Hines L."/>
            <person name="Eisenstein S."/>
            <person name="Koundinya M."/>
            <person name="Raphael J."/>
            <person name="Moreira D."/>
            <person name="Kelley T."/>
            <person name="LaBaer J."/>
            <person name="Lin Y."/>
            <person name="Phelan M."/>
            <person name="Farmer A."/>
        </authorList>
    </citation>
    <scope>NUCLEOTIDE SEQUENCE [LARGE SCALE MRNA] (ISOFORM 1)</scope>
</reference>
<reference key="6">
    <citation type="journal article" date="2004" name="Nat. Genet.">
        <title>Complete sequencing and characterization of 21,243 full-length human cDNAs.</title>
        <authorList>
            <person name="Ota T."/>
            <person name="Suzuki Y."/>
            <person name="Nishikawa T."/>
            <person name="Otsuki T."/>
            <person name="Sugiyama T."/>
            <person name="Irie R."/>
            <person name="Wakamatsu A."/>
            <person name="Hayashi K."/>
            <person name="Sato H."/>
            <person name="Nagai K."/>
            <person name="Kimura K."/>
            <person name="Makita H."/>
            <person name="Sekine M."/>
            <person name="Obayashi M."/>
            <person name="Nishi T."/>
            <person name="Shibahara T."/>
            <person name="Tanaka T."/>
            <person name="Ishii S."/>
            <person name="Yamamoto J."/>
            <person name="Saito K."/>
            <person name="Kawai Y."/>
            <person name="Isono Y."/>
            <person name="Nakamura Y."/>
            <person name="Nagahari K."/>
            <person name="Murakami K."/>
            <person name="Yasuda T."/>
            <person name="Iwayanagi T."/>
            <person name="Wagatsuma M."/>
            <person name="Shiratori A."/>
            <person name="Sudo H."/>
            <person name="Hosoiri T."/>
            <person name="Kaku Y."/>
            <person name="Kodaira H."/>
            <person name="Kondo H."/>
            <person name="Sugawara M."/>
            <person name="Takahashi M."/>
            <person name="Kanda K."/>
            <person name="Yokoi T."/>
            <person name="Furuya T."/>
            <person name="Kikkawa E."/>
            <person name="Omura Y."/>
            <person name="Abe K."/>
            <person name="Kamihara K."/>
            <person name="Katsuta N."/>
            <person name="Sato K."/>
            <person name="Tanikawa M."/>
            <person name="Yamazaki M."/>
            <person name="Ninomiya K."/>
            <person name="Ishibashi T."/>
            <person name="Yamashita H."/>
            <person name="Murakawa K."/>
            <person name="Fujimori K."/>
            <person name="Tanai H."/>
            <person name="Kimata M."/>
            <person name="Watanabe M."/>
            <person name="Hiraoka S."/>
            <person name="Chiba Y."/>
            <person name="Ishida S."/>
            <person name="Ono Y."/>
            <person name="Takiguchi S."/>
            <person name="Watanabe S."/>
            <person name="Yosida M."/>
            <person name="Hotuta T."/>
            <person name="Kusano J."/>
            <person name="Kanehori K."/>
            <person name="Takahashi-Fujii A."/>
            <person name="Hara H."/>
            <person name="Tanase T.-O."/>
            <person name="Nomura Y."/>
            <person name="Togiya S."/>
            <person name="Komai F."/>
            <person name="Hara R."/>
            <person name="Takeuchi K."/>
            <person name="Arita M."/>
            <person name="Imose N."/>
            <person name="Musashino K."/>
            <person name="Yuuki H."/>
            <person name="Oshima A."/>
            <person name="Sasaki N."/>
            <person name="Aotsuka S."/>
            <person name="Yoshikawa Y."/>
            <person name="Matsunawa H."/>
            <person name="Ichihara T."/>
            <person name="Shiohata N."/>
            <person name="Sano S."/>
            <person name="Moriya S."/>
            <person name="Momiyama H."/>
            <person name="Satoh N."/>
            <person name="Takami S."/>
            <person name="Terashima Y."/>
            <person name="Suzuki O."/>
            <person name="Nakagawa S."/>
            <person name="Senoh A."/>
            <person name="Mizoguchi H."/>
            <person name="Goto Y."/>
            <person name="Shimizu F."/>
            <person name="Wakebe H."/>
            <person name="Hishigaki H."/>
            <person name="Watanabe T."/>
            <person name="Sugiyama A."/>
            <person name="Takemoto M."/>
            <person name="Kawakami B."/>
            <person name="Yamazaki M."/>
            <person name="Watanabe K."/>
            <person name="Kumagai A."/>
            <person name="Itakura S."/>
            <person name="Fukuzumi Y."/>
            <person name="Fujimori Y."/>
            <person name="Komiyama M."/>
            <person name="Tashiro H."/>
            <person name="Tanigami A."/>
            <person name="Fujiwara T."/>
            <person name="Ono T."/>
            <person name="Yamada K."/>
            <person name="Fujii Y."/>
            <person name="Ozaki K."/>
            <person name="Hirao M."/>
            <person name="Ohmori Y."/>
            <person name="Kawabata A."/>
            <person name="Hikiji T."/>
            <person name="Kobatake N."/>
            <person name="Inagaki H."/>
            <person name="Ikema Y."/>
            <person name="Okamoto S."/>
            <person name="Okitani R."/>
            <person name="Kawakami T."/>
            <person name="Noguchi S."/>
            <person name="Itoh T."/>
            <person name="Shigeta K."/>
            <person name="Senba T."/>
            <person name="Matsumura K."/>
            <person name="Nakajima Y."/>
            <person name="Mizuno T."/>
            <person name="Morinaga M."/>
            <person name="Sasaki M."/>
            <person name="Togashi T."/>
            <person name="Oyama M."/>
            <person name="Hata H."/>
            <person name="Watanabe M."/>
            <person name="Komatsu T."/>
            <person name="Mizushima-Sugano J."/>
            <person name="Satoh T."/>
            <person name="Shirai Y."/>
            <person name="Takahashi Y."/>
            <person name="Nakagawa K."/>
            <person name="Okumura K."/>
            <person name="Nagase T."/>
            <person name="Nomura N."/>
            <person name="Kikuchi H."/>
            <person name="Masuho Y."/>
            <person name="Yamashita R."/>
            <person name="Nakai K."/>
            <person name="Yada T."/>
            <person name="Nakamura Y."/>
            <person name="Ohara O."/>
            <person name="Isogai T."/>
            <person name="Sugano S."/>
        </authorList>
    </citation>
    <scope>NUCLEOTIDE SEQUENCE [LARGE SCALE MRNA] (ISOFORMS 2; 3 AND 4)</scope>
    <source>
        <tissue>Embryo</tissue>
        <tissue>Testis</tissue>
    </source>
</reference>
<reference key="7">
    <citation type="submission" date="2005-04" db="EMBL/GenBank/DDBJ databases">
        <authorList>
            <person name="Suzuki Y."/>
            <person name="Sugano S."/>
            <person name="Totoki Y."/>
            <person name="Toyoda A."/>
            <person name="Takeda T."/>
            <person name="Sakaki Y."/>
            <person name="Tanaka A."/>
            <person name="Yokoyama S."/>
        </authorList>
    </citation>
    <scope>NUCLEOTIDE SEQUENCE [LARGE SCALE MRNA] (ISOFORM 1)</scope>
    <source>
        <tissue>Gastric mucosa</tissue>
    </source>
</reference>
<reference key="8">
    <citation type="journal article" date="2006" name="Nature">
        <title>The DNA sequence and biological annotation of human chromosome 1.</title>
        <authorList>
            <person name="Gregory S.G."/>
            <person name="Barlow K.F."/>
            <person name="McLay K.E."/>
            <person name="Kaul R."/>
            <person name="Swarbreck D."/>
            <person name="Dunham A."/>
            <person name="Scott C.E."/>
            <person name="Howe K.L."/>
            <person name="Woodfine K."/>
            <person name="Spencer C.C.A."/>
            <person name="Jones M.C."/>
            <person name="Gillson C."/>
            <person name="Searle S."/>
            <person name="Zhou Y."/>
            <person name="Kokocinski F."/>
            <person name="McDonald L."/>
            <person name="Evans R."/>
            <person name="Phillips K."/>
            <person name="Atkinson A."/>
            <person name="Cooper R."/>
            <person name="Jones C."/>
            <person name="Hall R.E."/>
            <person name="Andrews T.D."/>
            <person name="Lloyd C."/>
            <person name="Ainscough R."/>
            <person name="Almeida J.P."/>
            <person name="Ambrose K.D."/>
            <person name="Anderson F."/>
            <person name="Andrew R.W."/>
            <person name="Ashwell R.I.S."/>
            <person name="Aubin K."/>
            <person name="Babbage A.K."/>
            <person name="Bagguley C.L."/>
            <person name="Bailey J."/>
            <person name="Beasley H."/>
            <person name="Bethel G."/>
            <person name="Bird C.P."/>
            <person name="Bray-Allen S."/>
            <person name="Brown J.Y."/>
            <person name="Brown A.J."/>
            <person name="Buckley D."/>
            <person name="Burton J."/>
            <person name="Bye J."/>
            <person name="Carder C."/>
            <person name="Chapman J.C."/>
            <person name="Clark S.Y."/>
            <person name="Clarke G."/>
            <person name="Clee C."/>
            <person name="Cobley V."/>
            <person name="Collier R.E."/>
            <person name="Corby N."/>
            <person name="Coville G.J."/>
            <person name="Davies J."/>
            <person name="Deadman R."/>
            <person name="Dunn M."/>
            <person name="Earthrowl M."/>
            <person name="Ellington A.G."/>
            <person name="Errington H."/>
            <person name="Frankish A."/>
            <person name="Frankland J."/>
            <person name="French L."/>
            <person name="Garner P."/>
            <person name="Garnett J."/>
            <person name="Gay L."/>
            <person name="Ghori M.R.J."/>
            <person name="Gibson R."/>
            <person name="Gilby L.M."/>
            <person name="Gillett W."/>
            <person name="Glithero R.J."/>
            <person name="Grafham D.V."/>
            <person name="Griffiths C."/>
            <person name="Griffiths-Jones S."/>
            <person name="Grocock R."/>
            <person name="Hammond S."/>
            <person name="Harrison E.S.I."/>
            <person name="Hart E."/>
            <person name="Haugen E."/>
            <person name="Heath P.D."/>
            <person name="Holmes S."/>
            <person name="Holt K."/>
            <person name="Howden P.J."/>
            <person name="Hunt A.R."/>
            <person name="Hunt S.E."/>
            <person name="Hunter G."/>
            <person name="Isherwood J."/>
            <person name="James R."/>
            <person name="Johnson C."/>
            <person name="Johnson D."/>
            <person name="Joy A."/>
            <person name="Kay M."/>
            <person name="Kershaw J.K."/>
            <person name="Kibukawa M."/>
            <person name="Kimberley A.M."/>
            <person name="King A."/>
            <person name="Knights A.J."/>
            <person name="Lad H."/>
            <person name="Laird G."/>
            <person name="Lawlor S."/>
            <person name="Leongamornlert D.A."/>
            <person name="Lloyd D.M."/>
            <person name="Loveland J."/>
            <person name="Lovell J."/>
            <person name="Lush M.J."/>
            <person name="Lyne R."/>
            <person name="Martin S."/>
            <person name="Mashreghi-Mohammadi M."/>
            <person name="Matthews L."/>
            <person name="Matthews N.S.W."/>
            <person name="McLaren S."/>
            <person name="Milne S."/>
            <person name="Mistry S."/>
            <person name="Moore M.J.F."/>
            <person name="Nickerson T."/>
            <person name="O'Dell C.N."/>
            <person name="Oliver K."/>
            <person name="Palmeiri A."/>
            <person name="Palmer S.A."/>
            <person name="Parker A."/>
            <person name="Patel D."/>
            <person name="Pearce A.V."/>
            <person name="Peck A.I."/>
            <person name="Pelan S."/>
            <person name="Phelps K."/>
            <person name="Phillimore B.J."/>
            <person name="Plumb R."/>
            <person name="Rajan J."/>
            <person name="Raymond C."/>
            <person name="Rouse G."/>
            <person name="Saenphimmachak C."/>
            <person name="Sehra H.K."/>
            <person name="Sheridan E."/>
            <person name="Shownkeen R."/>
            <person name="Sims S."/>
            <person name="Skuce C.D."/>
            <person name="Smith M."/>
            <person name="Steward C."/>
            <person name="Subramanian S."/>
            <person name="Sycamore N."/>
            <person name="Tracey A."/>
            <person name="Tromans A."/>
            <person name="Van Helmond Z."/>
            <person name="Wall M."/>
            <person name="Wallis J.M."/>
            <person name="White S."/>
            <person name="Whitehead S.L."/>
            <person name="Wilkinson J.E."/>
            <person name="Willey D.L."/>
            <person name="Williams H."/>
            <person name="Wilming L."/>
            <person name="Wray P.W."/>
            <person name="Wu Z."/>
            <person name="Coulson A."/>
            <person name="Vaudin M."/>
            <person name="Sulston J.E."/>
            <person name="Durbin R.M."/>
            <person name="Hubbard T."/>
            <person name="Wooster R."/>
            <person name="Dunham I."/>
            <person name="Carter N.P."/>
            <person name="McVean G."/>
            <person name="Ross M.T."/>
            <person name="Harrow J."/>
            <person name="Olson M.V."/>
            <person name="Beck S."/>
            <person name="Rogers J."/>
            <person name="Bentley D.R."/>
        </authorList>
    </citation>
    <scope>NUCLEOTIDE SEQUENCE [LARGE SCALE GENOMIC DNA]</scope>
</reference>
<reference key="9">
    <citation type="journal article" date="2004" name="Genome Res.">
        <title>The status, quality, and expansion of the NIH full-length cDNA project: the Mammalian Gene Collection (MGC).</title>
        <authorList>
            <consortium name="The MGC Project Team"/>
        </authorList>
    </citation>
    <scope>NUCLEOTIDE SEQUENCE [LARGE SCALE MRNA] (ISOFORMS 1 AND 2)</scope>
    <source>
        <tissue>Brain</tissue>
        <tissue>Lung</tissue>
        <tissue>Testis</tissue>
    </source>
</reference>
<reference key="10">
    <citation type="journal article" date="2008" name="Nat. Cell Biol.">
        <title>GPHR is a novel anion channel critical for acidification and functions of the Golgi apparatus.</title>
        <authorList>
            <person name="Maeda Y."/>
            <person name="Ide T."/>
            <person name="Koike M."/>
            <person name="Uchiyama Y."/>
            <person name="Kinoshita T."/>
        </authorList>
    </citation>
    <scope>FUNCTION</scope>
    <scope>TRANSPORTER ACTIVITY</scope>
    <scope>SUBCELLULAR LOCATION</scope>
    <scope>SUBUNIT</scope>
    <scope>TISSUE SPECIFICITY</scope>
</reference>
<reference key="11">
    <citation type="journal article" date="2009" name="Cell">
        <title>Two novel GPCR-type G proteins are abscisic acid receptors in Arabidopsis.</title>
        <authorList>
            <person name="Pandey S."/>
            <person name="Nelson D.C."/>
            <person name="Assmann S.M."/>
        </authorList>
    </citation>
    <scope>LACK OF GTP-BINDING</scope>
</reference>
<name>GPHRA_HUMAN</name>
<organism>
    <name type="scientific">Homo sapiens</name>
    <name type="common">Human</name>
    <dbReference type="NCBI Taxonomy" id="9606"/>
    <lineage>
        <taxon>Eukaryota</taxon>
        <taxon>Metazoa</taxon>
        <taxon>Chordata</taxon>
        <taxon>Craniata</taxon>
        <taxon>Vertebrata</taxon>
        <taxon>Euteleostomi</taxon>
        <taxon>Mammalia</taxon>
        <taxon>Eutheria</taxon>
        <taxon>Euarchontoglires</taxon>
        <taxon>Primates</taxon>
        <taxon>Haplorrhini</taxon>
        <taxon>Catarrhini</taxon>
        <taxon>Hominidae</taxon>
        <taxon>Homo</taxon>
    </lineage>
</organism>
<protein>
    <recommendedName>
        <fullName evidence="8">Golgi pH regulator A</fullName>
    </recommendedName>
    <alternativeName>
        <fullName>Protein GPR89A</fullName>
    </alternativeName>
    <alternativeName>
        <fullName>Putative MAPK-activating protein PM01</fullName>
    </alternativeName>
    <alternativeName>
        <fullName>Putative NF-kappa-B-activating protein 90</fullName>
    </alternativeName>
</protein>
<comment type="function">
    <text evidence="1 3">Voltage-gated channel that enables the transfer of monoatomic anions such as iodide, chloride, bromide and fluoride which may function in counter-ion conductance and participates in Golgi acidification (PubMed:18794847). Plays a role in lymphocyte development, probably by acting as a RABL3 effector in hematopoietic cells (By similarity).</text>
</comment>
<comment type="catalytic activity">
    <reaction evidence="3">
        <text>iodide(out) = iodide(in)</text>
        <dbReference type="Rhea" id="RHEA:66324"/>
        <dbReference type="ChEBI" id="CHEBI:16382"/>
    </reaction>
</comment>
<comment type="catalytic activity">
    <reaction evidence="3">
        <text>chloride(in) = chloride(out)</text>
        <dbReference type="Rhea" id="RHEA:29823"/>
        <dbReference type="ChEBI" id="CHEBI:17996"/>
    </reaction>
</comment>
<comment type="catalytic activity">
    <reaction evidence="3">
        <text>bromide(in) = bromide(out)</text>
        <dbReference type="Rhea" id="RHEA:75383"/>
        <dbReference type="ChEBI" id="CHEBI:15858"/>
    </reaction>
</comment>
<comment type="catalytic activity">
    <reaction evidence="3">
        <text>fluoride(in) = fluoride(out)</text>
        <dbReference type="Rhea" id="RHEA:76159"/>
        <dbReference type="ChEBI" id="CHEBI:17051"/>
    </reaction>
</comment>
<comment type="subunit">
    <text evidence="1 3">Homotrimer (PubMed:18794847). Interacts with RABL3; the interaction stabilizes GPR89A (By similarity).</text>
</comment>
<comment type="subcellular location">
    <subcellularLocation>
        <location evidence="3">Golgi apparatus membrane</location>
        <topology evidence="2">Multi-pass membrane protein</topology>
    </subcellularLocation>
</comment>
<comment type="alternative products">
    <event type="alternative splicing"/>
    <isoform>
        <id>B7ZAQ6-1</id>
        <name>1</name>
        <sequence type="displayed"/>
    </isoform>
    <isoform>
        <id>B7ZAQ6-2</id>
        <name>2</name>
        <sequence type="described" ref="VSP_017247"/>
    </isoform>
    <isoform>
        <id>B7ZAQ6-3</id>
        <name>3</name>
        <sequence type="described" ref="VSP_039346"/>
    </isoform>
    <isoform>
        <id>B7ZAQ6-4</id>
        <name>4</name>
        <name>A</name>
        <sequence type="described" ref="VSP_055892 VSP_055893"/>
    </isoform>
</comment>
<comment type="tissue specificity">
    <text evidence="3">Ubiquitous.</text>
</comment>
<comment type="miscellaneous">
    <text evidence="4">Does not seem to be able to bind GTP.</text>
</comment>
<comment type="similarity">
    <text evidence="8">Belongs to the Golgi pH regulator (TC 1.A.38) family.</text>
</comment>
<keyword id="KW-0025">Alternative splicing</keyword>
<keyword id="KW-0325">Glycoprotein</keyword>
<keyword id="KW-0333">Golgi apparatus</keyword>
<keyword id="KW-0407">Ion channel</keyword>
<keyword id="KW-0406">Ion transport</keyword>
<keyword id="KW-0472">Membrane</keyword>
<keyword id="KW-0653">Protein transport</keyword>
<keyword id="KW-1185">Reference proteome</keyword>
<keyword id="KW-0812">Transmembrane</keyword>
<keyword id="KW-1133">Transmembrane helix</keyword>
<keyword id="KW-0813">Transport</keyword>
<keyword id="KW-0851">Voltage-gated channel</keyword>
<dbReference type="EMBL" id="AF132947">
    <property type="protein sequence ID" value="AAD27722.1"/>
    <property type="molecule type" value="mRNA"/>
</dbReference>
<dbReference type="EMBL" id="KJ535049">
    <property type="protein sequence ID" value="AHW56688.1"/>
    <property type="molecule type" value="mRNA"/>
</dbReference>
<dbReference type="EMBL" id="AY358966">
    <property type="protein sequence ID" value="AAQ89325.1"/>
    <property type="molecule type" value="mRNA"/>
</dbReference>
<dbReference type="EMBL" id="AB097024">
    <property type="protein sequence ID" value="BAC77377.1"/>
    <property type="molecule type" value="mRNA"/>
</dbReference>
<dbReference type="EMBL" id="AB097025">
    <property type="protein sequence ID" value="BAC77378.1"/>
    <property type="molecule type" value="mRNA"/>
</dbReference>
<dbReference type="EMBL" id="BT006679">
    <property type="protein sequence ID" value="AAP35325.1"/>
    <property type="molecule type" value="mRNA"/>
</dbReference>
<dbReference type="EMBL" id="AK021758">
    <property type="protein sequence ID" value="BAG51045.1"/>
    <property type="molecule type" value="mRNA"/>
</dbReference>
<dbReference type="EMBL" id="AK297145">
    <property type="protein sequence ID" value="BAG59645.1"/>
    <property type="molecule type" value="mRNA"/>
</dbReference>
<dbReference type="EMBL" id="AK301939">
    <property type="protein sequence ID" value="BAG63359.1"/>
    <property type="molecule type" value="mRNA"/>
</dbReference>
<dbReference type="EMBL" id="AK316371">
    <property type="protein sequence ID" value="BAH14742.1"/>
    <property type="molecule type" value="mRNA"/>
</dbReference>
<dbReference type="EMBL" id="AK223223">
    <property type="protein sequence ID" value="BAD96943.1"/>
    <property type="molecule type" value="mRNA"/>
</dbReference>
<dbReference type="EMBL" id="AL390725">
    <property type="protein sequence ID" value="CAI13712.2"/>
    <property type="molecule type" value="Genomic_DNA"/>
</dbReference>
<dbReference type="EMBL" id="BX511042">
    <property type="protein sequence ID" value="CAI13712.2"/>
    <property type="status" value="JOINED"/>
    <property type="molecule type" value="Genomic_DNA"/>
</dbReference>
<dbReference type="EMBL" id="CR628408">
    <property type="protein sequence ID" value="CAI13712.2"/>
    <property type="status" value="JOINED"/>
    <property type="molecule type" value="Genomic_DNA"/>
</dbReference>
<dbReference type="EMBL" id="BX511042">
    <property type="protein sequence ID" value="CAI13224.2"/>
    <property type="molecule type" value="Genomic_DNA"/>
</dbReference>
<dbReference type="EMBL" id="AL390725">
    <property type="protein sequence ID" value="CAI13224.2"/>
    <property type="status" value="JOINED"/>
    <property type="molecule type" value="Genomic_DNA"/>
</dbReference>
<dbReference type="EMBL" id="CR628408">
    <property type="protein sequence ID" value="CAI13224.2"/>
    <property type="status" value="JOINED"/>
    <property type="molecule type" value="Genomic_DNA"/>
</dbReference>
<dbReference type="EMBL" id="CR628408">
    <property type="protein sequence ID" value="CAM28366.1"/>
    <property type="molecule type" value="Genomic_DNA"/>
</dbReference>
<dbReference type="EMBL" id="AL390725">
    <property type="protein sequence ID" value="CAM28366.1"/>
    <property type="status" value="JOINED"/>
    <property type="molecule type" value="Genomic_DNA"/>
</dbReference>
<dbReference type="EMBL" id="BX511042">
    <property type="protein sequence ID" value="CAM28366.1"/>
    <property type="status" value="JOINED"/>
    <property type="molecule type" value="Genomic_DNA"/>
</dbReference>
<dbReference type="EMBL" id="BC003187">
    <property type="protein sequence ID" value="AAH03187.1"/>
    <property type="molecule type" value="mRNA"/>
</dbReference>
<dbReference type="EMBL" id="BC067816">
    <property type="protein sequence ID" value="AAH67816.1"/>
    <property type="molecule type" value="mRNA"/>
</dbReference>
<dbReference type="EMBL" id="BC146880">
    <property type="protein sequence ID" value="AAI46881.1"/>
    <property type="molecule type" value="mRNA"/>
</dbReference>
<dbReference type="CCDS" id="CCDS72857.1">
    <molecule id="B7ZAQ6-1"/>
</dbReference>
<dbReference type="CCDS" id="CCDS72858.1">
    <molecule id="B7ZAQ6-3"/>
</dbReference>
<dbReference type="RefSeq" id="NP_001091081.1">
    <molecule id="B7ZAQ6-1"/>
    <property type="nucleotide sequence ID" value="NM_001097612.2"/>
</dbReference>
<dbReference type="RefSeq" id="NP_001091082.2">
    <molecule id="B7ZAQ6-3"/>
    <property type="nucleotide sequence ID" value="NM_001097613.3"/>
</dbReference>
<dbReference type="RefSeq" id="NP_057418.1">
    <molecule id="B7ZAQ6-1"/>
    <property type="nucleotide sequence ID" value="NM_016334.3"/>
</dbReference>
<dbReference type="RefSeq" id="XP_005277458.1">
    <property type="nucleotide sequence ID" value="XM_005277401.3"/>
</dbReference>
<dbReference type="RefSeq" id="XP_005277459.1">
    <molecule id="B7ZAQ6-3"/>
    <property type="nucleotide sequence ID" value="XM_005277402.4"/>
</dbReference>
<dbReference type="RefSeq" id="XP_005277461.1">
    <property type="nucleotide sequence ID" value="XM_005277404.3"/>
</dbReference>
<dbReference type="RefSeq" id="XP_006711440.1">
    <property type="nucleotide sequence ID" value="XM_006711377.3"/>
</dbReference>
<dbReference type="RefSeq" id="XP_006711441.1">
    <property type="nucleotide sequence ID" value="XM_006711378.2"/>
</dbReference>
<dbReference type="RefSeq" id="XP_006711555.1">
    <molecule id="B7ZAQ6-1"/>
    <property type="nucleotide sequence ID" value="XM_006711492.5"/>
</dbReference>
<dbReference type="RefSeq" id="XP_006711556.1">
    <property type="nucleotide sequence ID" value="XM_006711493.3"/>
</dbReference>
<dbReference type="RefSeq" id="XP_011507912.1">
    <property type="nucleotide sequence ID" value="XM_011509610.2"/>
</dbReference>
<dbReference type="RefSeq" id="XP_011507914.1">
    <property type="nucleotide sequence ID" value="XM_011509612.2"/>
</dbReference>
<dbReference type="RefSeq" id="XP_011508210.1">
    <molecule id="B7ZAQ6-3"/>
    <property type="nucleotide sequence ID" value="XM_011509908.3"/>
</dbReference>
<dbReference type="RefSeq" id="XP_011508211.1">
    <molecule id="B7ZAQ6-3"/>
    <property type="nucleotide sequence ID" value="XM_011509909.3"/>
</dbReference>
<dbReference type="RefSeq" id="XP_016856937.1">
    <property type="nucleotide sequence ID" value="XM_017001448.1"/>
</dbReference>
<dbReference type="RefSeq" id="XP_047284660.1">
    <molecule id="B7ZAQ6-2"/>
    <property type="nucleotide sequence ID" value="XM_047428704.1"/>
</dbReference>
<dbReference type="RefSeq" id="XP_054194398.1">
    <molecule id="B7ZAQ6-1"/>
    <property type="nucleotide sequence ID" value="XM_054338423.1"/>
</dbReference>
<dbReference type="RefSeq" id="XP_054194399.1">
    <molecule id="B7ZAQ6-3"/>
    <property type="nucleotide sequence ID" value="XM_054338424.1"/>
</dbReference>
<dbReference type="RefSeq" id="XP_054194400.1">
    <molecule id="B7ZAQ6-2"/>
    <property type="nucleotide sequence ID" value="XM_054338425.1"/>
</dbReference>
<dbReference type="RefSeq" id="XP_054194401.1">
    <molecule id="B7ZAQ6-3"/>
    <property type="nucleotide sequence ID" value="XM_054338426.1"/>
</dbReference>
<dbReference type="SMR" id="B7ZAQ6"/>
<dbReference type="BioGRID" id="119554">
    <property type="interactions" value="51"/>
</dbReference>
<dbReference type="BioGRID" id="575849">
    <property type="interactions" value="133"/>
</dbReference>
<dbReference type="FunCoup" id="B7ZAQ6">
    <property type="interactions" value="1142"/>
</dbReference>
<dbReference type="IntAct" id="B7ZAQ6">
    <property type="interactions" value="92"/>
</dbReference>
<dbReference type="STRING" id="9606.ENSP00000319673"/>
<dbReference type="GlyCosmos" id="B7ZAQ6">
    <property type="glycosylation" value="2 sites, No reported glycans"/>
</dbReference>
<dbReference type="GlyGen" id="B7ZAQ6">
    <property type="glycosylation" value="2 sites"/>
</dbReference>
<dbReference type="iPTMnet" id="B7ZAQ6"/>
<dbReference type="PhosphoSitePlus" id="B7ZAQ6"/>
<dbReference type="SwissPalm" id="B7ZAQ6"/>
<dbReference type="BioMuta" id="GPR89A"/>
<dbReference type="jPOST" id="B7ZAQ6"/>
<dbReference type="MassIVE" id="B7ZAQ6"/>
<dbReference type="PaxDb" id="9606-ENSP00000319673"/>
<dbReference type="ProteomicsDB" id="7078">
    <molecule id="B7ZAQ6-2"/>
</dbReference>
<dbReference type="ProteomicsDB" id="7079">
    <molecule id="B7ZAQ6-3"/>
</dbReference>
<dbReference type="Pumba" id="B7ZAQ6"/>
<dbReference type="Antibodypedia" id="10137">
    <property type="antibodies" value="135 antibodies from 17 providers"/>
</dbReference>
<dbReference type="DNASU" id="51463"/>
<dbReference type="Ensembl" id="ENST00000313835.14">
    <molecule id="B7ZAQ6-1"/>
    <property type="protein sequence ID" value="ENSP00000319673.9"/>
    <property type="gene ID" value="ENSG00000117262.19"/>
</dbReference>
<dbReference type="Ensembl" id="ENST00000460277.5">
    <molecule id="B7ZAQ6-4"/>
    <property type="protein sequence ID" value="ENSP00000436705.1"/>
    <property type="gene ID" value="ENSG00000117262.19"/>
</dbReference>
<dbReference type="Ensembl" id="ENST00000462900.2">
    <molecule id="B7ZAQ6-3"/>
    <property type="protein sequence ID" value="ENSP00000432248.1"/>
    <property type="gene ID" value="ENSG00000117262.19"/>
</dbReference>
<dbReference type="Ensembl" id="ENST00000528944.5">
    <molecule id="B7ZAQ6-4"/>
    <property type="protein sequence ID" value="ENSP00000434108.1"/>
    <property type="gene ID" value="ENSG00000117262.19"/>
</dbReference>
<dbReference type="Ensembl" id="ENST00000534502.5">
    <molecule id="B7ZAQ6-3"/>
    <property type="protein sequence ID" value="ENSP00000434495.1"/>
    <property type="gene ID" value="ENSG00000117262.19"/>
</dbReference>
<dbReference type="GeneID" id="51463"/>
<dbReference type="GeneID" id="653519"/>
<dbReference type="KEGG" id="hsa:51463"/>
<dbReference type="KEGG" id="hsa:653519"/>
<dbReference type="MANE-Select" id="ENST00000313835.14">
    <property type="protein sequence ID" value="ENSP00000319673.9"/>
    <property type="RefSeq nucleotide sequence ID" value="NM_001097612.2"/>
    <property type="RefSeq protein sequence ID" value="NP_001091081.1"/>
</dbReference>
<dbReference type="UCSC" id="uc010ozb.2">
    <molecule id="B7ZAQ6-1"/>
    <property type="organism name" value="human"/>
</dbReference>
<dbReference type="AGR" id="HGNC:13840"/>
<dbReference type="AGR" id="HGNC:31984"/>
<dbReference type="CTD" id="51463"/>
<dbReference type="CTD" id="653519"/>
<dbReference type="DisGeNET" id="653519"/>
<dbReference type="GeneCards" id="GPR89A"/>
<dbReference type="HGNC" id="HGNC:31984">
    <property type="gene designation" value="GPR89A"/>
</dbReference>
<dbReference type="HPA" id="ENSG00000117262">
    <property type="expression patterns" value="Low tissue specificity"/>
</dbReference>
<dbReference type="MIM" id="612821">
    <property type="type" value="gene"/>
</dbReference>
<dbReference type="neXtProt" id="NX_B7ZAQ6"/>
<dbReference type="PharmGKB" id="PA134986137"/>
<dbReference type="VEuPathDB" id="HostDB:ENSG00000117262"/>
<dbReference type="eggNOG" id="KOG2417">
    <property type="taxonomic scope" value="Eukaryota"/>
</dbReference>
<dbReference type="GeneTree" id="ENSGT00390000000684"/>
<dbReference type="HOGENOM" id="CLU_2003122_0_0_1"/>
<dbReference type="InParanoid" id="B7ZAQ6"/>
<dbReference type="OMA" id="FSVYCVY"/>
<dbReference type="OrthoDB" id="264392at2759"/>
<dbReference type="PAN-GO" id="B7ZAQ6">
    <property type="GO annotations" value="3 GO annotations based on evolutionary models"/>
</dbReference>
<dbReference type="PhylomeDB" id="B7ZAQ6"/>
<dbReference type="TreeFam" id="TF313484"/>
<dbReference type="PathwayCommons" id="B7ZAQ6"/>
<dbReference type="SignaLink" id="B7ZAQ6"/>
<dbReference type="BioGRID-ORCS" id="51463">
    <property type="hits" value="102 hits in 680 CRISPR screens"/>
</dbReference>
<dbReference type="BioGRID-ORCS" id="653519">
    <property type="hits" value="250 hits in 1041 CRISPR screens"/>
</dbReference>
<dbReference type="ChiTaRS" id="GPR89A">
    <property type="organism name" value="human"/>
</dbReference>
<dbReference type="GeneWiki" id="GPR89B"/>
<dbReference type="Pharos" id="B7ZAQ6">
    <property type="development level" value="Tbio"/>
</dbReference>
<dbReference type="PRO" id="PR:B7ZAQ6"/>
<dbReference type="Proteomes" id="UP000005640">
    <property type="component" value="Chromosome 1"/>
</dbReference>
<dbReference type="RNAct" id="B7ZAQ6">
    <property type="molecule type" value="protein"/>
</dbReference>
<dbReference type="Bgee" id="ENSG00000117262">
    <property type="expression patterns" value="Expressed in corpus callosum and 104 other cell types or tissues"/>
</dbReference>
<dbReference type="ExpressionAtlas" id="B7ZAQ6">
    <property type="expression patterns" value="baseline and differential"/>
</dbReference>
<dbReference type="GO" id="GO:0032580">
    <property type="term" value="C:Golgi cisterna membrane"/>
    <property type="evidence" value="ECO:0000314"/>
    <property type="project" value="UniProtKB"/>
</dbReference>
<dbReference type="GO" id="GO:0000139">
    <property type="term" value="C:Golgi membrane"/>
    <property type="evidence" value="ECO:0007669"/>
    <property type="project" value="UniProtKB-SubCell"/>
</dbReference>
<dbReference type="GO" id="GO:0030660">
    <property type="term" value="C:Golgi-associated vesicle membrane"/>
    <property type="evidence" value="ECO:0000314"/>
    <property type="project" value="UniProtKB"/>
</dbReference>
<dbReference type="GO" id="GO:0034702">
    <property type="term" value="C:monoatomic ion channel complex"/>
    <property type="evidence" value="ECO:0007669"/>
    <property type="project" value="UniProtKB-KW"/>
</dbReference>
<dbReference type="GO" id="GO:0008308">
    <property type="term" value="F:voltage-gated monoatomic anion channel activity"/>
    <property type="evidence" value="ECO:0000314"/>
    <property type="project" value="UniProtKB"/>
</dbReference>
<dbReference type="GO" id="GO:0051452">
    <property type="term" value="P:intracellular pH reduction"/>
    <property type="evidence" value="ECO:0000314"/>
    <property type="project" value="UniProtKB"/>
</dbReference>
<dbReference type="GO" id="GO:0043123">
    <property type="term" value="P:positive regulation of canonical NF-kappaB signal transduction"/>
    <property type="evidence" value="ECO:0007001"/>
    <property type="project" value="UniProtKB"/>
</dbReference>
<dbReference type="GO" id="GO:0015031">
    <property type="term" value="P:protein transport"/>
    <property type="evidence" value="ECO:0007669"/>
    <property type="project" value="UniProtKB-KW"/>
</dbReference>
<dbReference type="GO" id="GO:0030217">
    <property type="term" value="P:T cell differentiation"/>
    <property type="evidence" value="ECO:0000250"/>
    <property type="project" value="UniProtKB"/>
</dbReference>
<dbReference type="InterPro" id="IPR025969">
    <property type="entry name" value="ABA_GPCR_dom"/>
</dbReference>
<dbReference type="InterPro" id="IPR022535">
    <property type="entry name" value="Golgi_pH-regulator_cons_dom"/>
</dbReference>
<dbReference type="InterPro" id="IPR015672">
    <property type="entry name" value="GPHR/GTG"/>
</dbReference>
<dbReference type="PANTHER" id="PTHR15948">
    <property type="entry name" value="G-PROTEIN COUPLED RECEPTOR 89-RELATED"/>
    <property type="match status" value="1"/>
</dbReference>
<dbReference type="PANTHER" id="PTHR15948:SF0">
    <property type="entry name" value="GOLGI PH REGULATOR A-RELATED"/>
    <property type="match status" value="1"/>
</dbReference>
<dbReference type="Pfam" id="PF12430">
    <property type="entry name" value="ABA_GPCR"/>
    <property type="match status" value="1"/>
</dbReference>
<dbReference type="Pfam" id="PF12537">
    <property type="entry name" value="GPHR_N"/>
    <property type="match status" value="1"/>
</dbReference>
<accession>B7ZAQ6</accession>
<accession>A6NN37</accession>
<accession>B2RUV3</accession>
<accession>B3KMN3</accession>
<accession>B4DLT3</accession>
<accession>B4DXE7</accession>
<accession>Q53FQ9</accession>
<accession>Q5T2V8</accession>
<accession>Q5T5P5</accession>
<accession>Q659E2</accession>
<accession>Q6NVY5</accession>
<accession>Q9P0S4</accession>
<accession>Q9Y302</accession>
<feature type="chain" id="PRO_0000223260" description="Golgi pH regulator A">
    <location>
        <begin position="1"/>
        <end position="455"/>
    </location>
</feature>
<feature type="transmembrane region" description="Helical" evidence="2">
    <location>
        <begin position="5"/>
        <end position="25"/>
    </location>
</feature>
<feature type="transmembrane region" description="Helical" evidence="2">
    <location>
        <begin position="46"/>
        <end position="66"/>
    </location>
</feature>
<feature type="transmembrane region" description="Helical" evidence="2">
    <location>
        <begin position="79"/>
        <end position="99"/>
    </location>
</feature>
<feature type="transmembrane region" description="Helical" evidence="2">
    <location>
        <begin position="114"/>
        <end position="134"/>
    </location>
</feature>
<feature type="transmembrane region" description="Helical" evidence="2">
    <location>
        <begin position="150"/>
        <end position="170"/>
    </location>
</feature>
<feature type="transmembrane region" description="Helical" evidence="2">
    <location>
        <begin position="290"/>
        <end position="310"/>
    </location>
</feature>
<feature type="transmembrane region" description="Helical" evidence="2">
    <location>
        <begin position="343"/>
        <end position="363"/>
    </location>
</feature>
<feature type="transmembrane region" description="Helical" evidence="2">
    <location>
        <begin position="378"/>
        <end position="398"/>
    </location>
</feature>
<feature type="transmembrane region" description="Helical" evidence="2">
    <location>
        <begin position="425"/>
        <end position="445"/>
    </location>
</feature>
<feature type="glycosylation site" description="N-linked (GlcNAc...) asparagine" evidence="2">
    <location>
        <position position="180"/>
    </location>
</feature>
<feature type="glycosylation site" description="N-linked (GlcNAc...) asparagine" evidence="2">
    <location>
        <position position="243"/>
    </location>
</feature>
<feature type="splice variant" id="VSP_017247" description="In isoform 2." evidence="5 6">
    <location>
        <begin position="1"/>
        <end position="120"/>
    </location>
</feature>
<feature type="splice variant" id="VSP_039346" description="In isoform 3." evidence="5">
    <location>
        <begin position="1"/>
        <end position="25"/>
    </location>
</feature>
<feature type="splice variant" id="VSP_055892" description="In isoform 4." evidence="5 7">
    <original>HKQRLLFSCLLWLTFMYFF</original>
    <variation>LSPLSQCINNDCFFPVSYG</variation>
    <location>
        <begin position="106"/>
        <end position="124"/>
    </location>
</feature>
<feature type="splice variant" id="VSP_055893" description="In isoform 4." evidence="5 7">
    <location>
        <begin position="125"/>
        <end position="455"/>
    </location>
</feature>
<feature type="sequence conflict" description="In Ref. 6; BAG63359." evidence="8" ref="6">
    <original>S</original>
    <variation>G</variation>
    <location>
        <position position="100"/>
    </location>
</feature>
<feature type="sequence conflict" description="In Ref. 7; BAD96943." evidence="8" ref="7">
    <original>N</original>
    <variation>MPD</variation>
    <location>
        <position position="243"/>
    </location>
</feature>
<feature type="sequence conflict" description="In Ref. 7; BAD96943." evidence="8" ref="7">
    <original>I</original>
    <variation>T</variation>
    <location>
        <position position="379"/>
    </location>
</feature>
<gene>
    <name evidence="9" type="primary">GPR89A</name>
    <name type="synonym">GPHRA</name>
    <name type="synonym">GPR89</name>
    <name type="synonym">SH120</name>
    <name type="ORF">CGI-13</name>
    <name type="ORF">UNQ192/PRO218</name>
</gene>
<sequence>MSFLIDSSIMITSQILFFGFGWLFFMRQLFKDYEIRQYVVQVIFSVTFAFSCTMFELIIFEILGVLNSSSRYFHWKMNLCVILLILVFMVPFYIGYFIVSNIRLLHKQRLLFSCLLWLTFMYFFWKLGDPFPILSPKHGILSIEQLISRVGVIGVTLMALLSGFGAVNCPYTYMSYFLRNVTDTDILALERRLLQTMDMIISKKKRMAMARRTMFQKGEVHNKPSGFWGMIKSVTTSASGSENLTLIQQEVDALEELSRQLFLETADLYATKERIEYSKTFKGKYFNFLGYFFSIYCVWKIFMATINIVFDRVGKTDPVTRGIEITVNYLGIQFDVKFWSQHISFILVGIIIVTSIRGLLITLTKFFYAISSSKSSNVIVLLLAQIMGMYFVSSVLLIRMSMPLEYRTIITEVLGELQFNFYHRWFDVIFLVSALSSILFLYLAHKQAPEKQMAP</sequence>